<dbReference type="EMBL" id="L06816">
    <property type="protein sequence ID" value="AAA74503.1"/>
    <property type="molecule type" value="Genomic_DNA"/>
</dbReference>
<dbReference type="EMBL" id="M64230">
    <property type="protein sequence ID" value="AAA45949.1"/>
    <property type="molecule type" value="Genomic_DNA"/>
</dbReference>
<dbReference type="EMBL" id="U68299">
    <property type="status" value="NOT_ANNOTATED_CDS"/>
    <property type="molecule type" value="Genomic_DNA"/>
</dbReference>
<dbReference type="PIR" id="A38470">
    <property type="entry name" value="EDBEMT"/>
</dbReference>
<dbReference type="Proteomes" id="UP000008774">
    <property type="component" value="Segment"/>
</dbReference>
<dbReference type="GO" id="GO:0030430">
    <property type="term" value="C:host cell cytoplasm"/>
    <property type="evidence" value="ECO:0007669"/>
    <property type="project" value="UniProtKB-SubCell"/>
</dbReference>
<dbReference type="GO" id="GO:0042025">
    <property type="term" value="C:host cell nucleus"/>
    <property type="evidence" value="ECO:0007669"/>
    <property type="project" value="UniProtKB-SubCell"/>
</dbReference>
<dbReference type="GO" id="GO:0039646">
    <property type="term" value="P:symbiont-mediated perturbation of host cell cycle G0/G1 transition checkpoint"/>
    <property type="evidence" value="ECO:0007669"/>
    <property type="project" value="UniProtKB-KW"/>
</dbReference>
<dbReference type="GO" id="GO:0044071">
    <property type="term" value="P:symbiont-mediated perturbation of host cell cycle progression"/>
    <property type="evidence" value="ECO:0007669"/>
    <property type="project" value="UniProtKB-KW"/>
</dbReference>
<dbReference type="InterPro" id="IPR003360">
    <property type="entry name" value="US22-like"/>
</dbReference>
<dbReference type="Pfam" id="PF02393">
    <property type="entry name" value="US22"/>
    <property type="match status" value="2"/>
</dbReference>
<proteinExistence type="inferred from homology"/>
<organism>
    <name type="scientific">Murid herpesvirus 1 (strain Smith)</name>
    <name type="common">MuHV-1</name>
    <name type="synonym">Mouse cytomegalovirus</name>
    <dbReference type="NCBI Taxonomy" id="10367"/>
    <lineage>
        <taxon>Viruses</taxon>
        <taxon>Duplodnaviria</taxon>
        <taxon>Heunggongvirae</taxon>
        <taxon>Peploviricota</taxon>
        <taxon>Herviviricetes</taxon>
        <taxon>Herpesvirales</taxon>
        <taxon>Orthoherpesviridae</taxon>
        <taxon>Betaherpesvirinae</taxon>
        <taxon>Muromegalovirus</taxon>
        <taxon>Muromegalovirus muridbeta1</taxon>
        <taxon>Murid herpesvirus 1</taxon>
    </lineage>
</organism>
<feature type="chain" id="PRO_0000115354" description="Immediate-early protein 2">
    <location>
        <begin position="1"/>
        <end position="391"/>
    </location>
</feature>
<evidence type="ECO:0000305" key="1"/>
<protein>
    <recommendedName>
        <fullName>Immediate-early protein 2</fullName>
        <shortName>IE2</shortName>
    </recommendedName>
</protein>
<sequence length="391" mass="43801">MERVRGASSSDSVATLHGDHNYHCMATFKLDCTSARTRGVVSILEHRDPATVDDIFMQRVCHDINDVLRPVECLTSFPEYRRTLRVAVEAATELHGVSALSGQLTKFLEDHDGAMLPLAWPPNRYLRLTSGRKLGYLDVAEKLRKEYPMCNGPLEVLGVILGPGQSLYSDQHPVLLMGLTGTIFLHARGRPVWSPDYDPERDADRLFLAAESLQSFGREGLCRCDNVYTEDGGAPYATPEDPVLKNIVFTPHLGGKALHQQICKIKGHTWYLNGCPGMLKDRVFVATPDIPPFVRHVNLELFGHRFLPIGRVTRSPEDPECEMFIMVDAGGAIYGHMLDSGKVRRLADNFDQFMRMGTRRVISISRWLREVVSTPSTRRPRLGPRTTGSFS</sequence>
<reference key="1">
    <citation type="journal article" date="1991" name="J. Virol.">
        <title>Structure and expression of murine cytomegalovirus immediate-early gene 2.</title>
        <authorList>
            <person name="Messerle M."/>
            <person name="Keil G.M."/>
            <person name="Koszinowski U.H."/>
        </authorList>
    </citation>
    <scope>NUCLEOTIDE SEQUENCE [GENOMIC DNA]</scope>
</reference>
<reference key="2">
    <citation type="journal article" date="1996" name="J. Virol.">
        <title>Analysis of the complete DNA sequence of murine cytomegalovirus.</title>
        <authorList>
            <person name="Rawlinson W.D."/>
            <person name="Farrell H.E."/>
            <person name="Barrell B.G."/>
        </authorList>
    </citation>
    <scope>NUCLEOTIDE SEQUENCE [LARGE SCALE GENOMIC DNA]</scope>
</reference>
<name>VIE2_MUHVS</name>
<gene>
    <name type="primary">IE2</name>
</gene>
<organismHost>
    <name type="scientific">Mus musculus</name>
    <name type="common">Mouse</name>
    <dbReference type="NCBI Taxonomy" id="10090"/>
</organismHost>
<accession>P24909</accession>
<comment type="function">
    <text>Involved in the reactivation of latent MCMV in spleen cells.</text>
</comment>
<comment type="subcellular location">
    <subcellularLocation>
        <location>Host cytoplasm</location>
    </subcellularLocation>
    <subcellularLocation>
        <location>Host nucleus</location>
    </subcellularLocation>
</comment>
<comment type="similarity">
    <text evidence="1">Belongs to the herpesviridae US22 family.</text>
</comment>
<keyword id="KW-0244">Early protein</keyword>
<keyword id="KW-1077">G0/G1 host cell cycle checkpoint dysregulation by virus</keyword>
<keyword id="KW-1035">Host cytoplasm</keyword>
<keyword id="KW-1048">Host nucleus</keyword>
<keyword id="KW-0945">Host-virus interaction</keyword>
<keyword id="KW-1121">Modulation of host cell cycle by virus</keyword>
<keyword id="KW-1185">Reference proteome</keyword>